<feature type="chain" id="PRO_0000238582" description="Sorting nexin-3">
    <location>
        <begin position="1"/>
        <end position="142"/>
    </location>
</feature>
<feature type="domain" description="PX" evidence="2">
    <location>
        <begin position="21"/>
        <end position="138"/>
    </location>
</feature>
<feature type="binding site" evidence="1">
    <location>
        <position position="64"/>
    </location>
    <ligand>
        <name>a 1,2-diacyl-sn-glycero-3-phospho-(1D-myo-inositol-3-phosphate)</name>
        <dbReference type="ChEBI" id="CHEBI:58088"/>
    </ligand>
</feature>
<feature type="binding site" evidence="1">
    <location>
        <position position="66"/>
    </location>
    <ligand>
        <name>a 1,2-diacyl-sn-glycero-3-phospho-(1D-myo-inositol-3-phosphate)</name>
        <dbReference type="ChEBI" id="CHEBI:58088"/>
    </ligand>
</feature>
<feature type="binding site" evidence="1">
    <location>
        <position position="90"/>
    </location>
    <ligand>
        <name>a 1,2-diacyl-sn-glycero-3-phospho-(1D-myo-inositol-3-phosphate)</name>
        <dbReference type="ChEBI" id="CHEBI:58088"/>
    </ligand>
</feature>
<feature type="binding site" evidence="1">
    <location>
        <position position="95"/>
    </location>
    <ligand>
        <name>a 1,2-diacyl-sn-glycero-3-phospho-(1D-myo-inositol-3-phosphate)</name>
        <dbReference type="ChEBI" id="CHEBI:58088"/>
    </ligand>
</feature>
<feature type="binding site" evidence="1">
    <location>
        <position position="104"/>
    </location>
    <ligand>
        <name>a 1,2-diacyl-sn-glycero-3-phospho-(1D-myo-inositol-3-phosphate)</name>
        <dbReference type="ChEBI" id="CHEBI:58088"/>
    </ligand>
</feature>
<proteinExistence type="inferred from homology"/>
<reference key="1">
    <citation type="journal article" date="2005" name="Nature">
        <title>Genomic sequence of the pathogenic and allergenic filamentous fungus Aspergillus fumigatus.</title>
        <authorList>
            <person name="Nierman W.C."/>
            <person name="Pain A."/>
            <person name="Anderson M.J."/>
            <person name="Wortman J.R."/>
            <person name="Kim H.S."/>
            <person name="Arroyo J."/>
            <person name="Berriman M."/>
            <person name="Abe K."/>
            <person name="Archer D.B."/>
            <person name="Bermejo C."/>
            <person name="Bennett J.W."/>
            <person name="Bowyer P."/>
            <person name="Chen D."/>
            <person name="Collins M."/>
            <person name="Coulsen R."/>
            <person name="Davies R."/>
            <person name="Dyer P.S."/>
            <person name="Farman M.L."/>
            <person name="Fedorova N."/>
            <person name="Fedorova N.D."/>
            <person name="Feldblyum T.V."/>
            <person name="Fischer R."/>
            <person name="Fosker N."/>
            <person name="Fraser A."/>
            <person name="Garcia J.L."/>
            <person name="Garcia M.J."/>
            <person name="Goble A."/>
            <person name="Goldman G.H."/>
            <person name="Gomi K."/>
            <person name="Griffith-Jones S."/>
            <person name="Gwilliam R."/>
            <person name="Haas B.J."/>
            <person name="Haas H."/>
            <person name="Harris D.E."/>
            <person name="Horiuchi H."/>
            <person name="Huang J."/>
            <person name="Humphray S."/>
            <person name="Jimenez J."/>
            <person name="Keller N."/>
            <person name="Khouri H."/>
            <person name="Kitamoto K."/>
            <person name="Kobayashi T."/>
            <person name="Konzack S."/>
            <person name="Kulkarni R."/>
            <person name="Kumagai T."/>
            <person name="Lafton A."/>
            <person name="Latge J.-P."/>
            <person name="Li W."/>
            <person name="Lord A."/>
            <person name="Lu C."/>
            <person name="Majoros W.H."/>
            <person name="May G.S."/>
            <person name="Miller B.L."/>
            <person name="Mohamoud Y."/>
            <person name="Molina M."/>
            <person name="Monod M."/>
            <person name="Mouyna I."/>
            <person name="Mulligan S."/>
            <person name="Murphy L.D."/>
            <person name="O'Neil S."/>
            <person name="Paulsen I."/>
            <person name="Penalva M.A."/>
            <person name="Pertea M."/>
            <person name="Price C."/>
            <person name="Pritchard B.L."/>
            <person name="Quail M.A."/>
            <person name="Rabbinowitsch E."/>
            <person name="Rawlins N."/>
            <person name="Rajandream M.A."/>
            <person name="Reichard U."/>
            <person name="Renauld H."/>
            <person name="Robson G.D."/>
            <person name="Rodriguez de Cordoba S."/>
            <person name="Rodriguez-Pena J.M."/>
            <person name="Ronning C.M."/>
            <person name="Rutter S."/>
            <person name="Salzberg S.L."/>
            <person name="Sanchez M."/>
            <person name="Sanchez-Ferrero J.C."/>
            <person name="Saunders D."/>
            <person name="Seeger K."/>
            <person name="Squares R."/>
            <person name="Squares S."/>
            <person name="Takeuchi M."/>
            <person name="Tekaia F."/>
            <person name="Turner G."/>
            <person name="Vazquez de Aldana C.R."/>
            <person name="Weidman J."/>
            <person name="White O."/>
            <person name="Woodward J.R."/>
            <person name="Yu J.-H."/>
            <person name="Fraser C.M."/>
            <person name="Galagan J.E."/>
            <person name="Asai K."/>
            <person name="Machida M."/>
            <person name="Hall N."/>
            <person name="Barrell B.G."/>
            <person name="Denning D.W."/>
        </authorList>
    </citation>
    <scope>NUCLEOTIDE SEQUENCE [LARGE SCALE GENOMIC DNA]</scope>
    <source>
        <strain>ATCC MYA-4609 / CBS 101355 / FGSC A1100 / Af293</strain>
    </source>
</reference>
<comment type="function">
    <text evidence="1">Required for retention of late Golgi membrane proteins. Component of the retrieval machinery that functions by direct interaction with the cytosolic tails of certain TGN membrane proteins during the sorting/budding process at the prevacuolar compartment. Binds phosphatidylinositol 3-phosphate (PtdIns(P3)) (By similarity).</text>
</comment>
<comment type="subcellular location">
    <subcellularLocation>
        <location evidence="1">Cytoplasm</location>
    </subcellularLocation>
    <subcellularLocation>
        <location evidence="3">Golgi apparatus membrane</location>
        <topology evidence="3">Peripheral membrane protein</topology>
        <orientation evidence="3">Cytoplasmic side</orientation>
    </subcellularLocation>
    <subcellularLocation>
        <location evidence="3">Prevacuolar compartment membrane</location>
        <topology evidence="3">Peripheral membrane protein</topology>
        <orientation evidence="3">Cytoplasmic side</orientation>
    </subcellularLocation>
</comment>
<comment type="domain">
    <text evidence="1">The PX domain binds phosphatidylinositol 3-phosphate which is necessary for peripheral membrane localization.</text>
</comment>
<comment type="similarity">
    <text evidence="3">Belongs to the sorting nexin family.</text>
</comment>
<keyword id="KW-0963">Cytoplasm</keyword>
<keyword id="KW-0333">Golgi apparatus</keyword>
<keyword id="KW-0446">Lipid-binding</keyword>
<keyword id="KW-0472">Membrane</keyword>
<keyword id="KW-0653">Protein transport</keyword>
<keyword id="KW-1185">Reference proteome</keyword>
<keyword id="KW-0813">Transport</keyword>
<name>SNX3_ASPFU</name>
<evidence type="ECO:0000250" key="1"/>
<evidence type="ECO:0000255" key="2">
    <source>
        <dbReference type="PROSITE-ProRule" id="PRU00147"/>
    </source>
</evidence>
<evidence type="ECO:0000305" key="3"/>
<organism>
    <name type="scientific">Aspergillus fumigatus (strain ATCC MYA-4609 / CBS 101355 / FGSC A1100 / Af293)</name>
    <name type="common">Neosartorya fumigata</name>
    <dbReference type="NCBI Taxonomy" id="330879"/>
    <lineage>
        <taxon>Eukaryota</taxon>
        <taxon>Fungi</taxon>
        <taxon>Dikarya</taxon>
        <taxon>Ascomycota</taxon>
        <taxon>Pezizomycotina</taxon>
        <taxon>Eurotiomycetes</taxon>
        <taxon>Eurotiomycetidae</taxon>
        <taxon>Eurotiales</taxon>
        <taxon>Aspergillaceae</taxon>
        <taxon>Aspergillus</taxon>
        <taxon>Aspergillus subgen. Fumigati</taxon>
    </lineage>
</organism>
<sequence>MQAVPESRQQTFEEIYGPPENFLEIEVRNPQTHGTSRNMYTSYEIVCRTNIPAFKLKHSVVRRRYSDFEYFRDILERESTRVTIPPLPGKVFTNRFSDDVIEHRREGLQRFLQIVAGHPLLQTGSKVLASFIQDPNWDRNAW</sequence>
<protein>
    <recommendedName>
        <fullName>Sorting nexin-3</fullName>
    </recommendedName>
</protein>
<accession>Q4WWS3</accession>
<dbReference type="EMBL" id="AAHF01000002">
    <property type="protein sequence ID" value="EAL92880.2"/>
    <property type="molecule type" value="Genomic_DNA"/>
</dbReference>
<dbReference type="RefSeq" id="XP_754918.2">
    <property type="nucleotide sequence ID" value="XM_749825.2"/>
</dbReference>
<dbReference type="SMR" id="Q4WWS3"/>
<dbReference type="FunCoup" id="Q4WWS3">
    <property type="interactions" value="456"/>
</dbReference>
<dbReference type="STRING" id="330879.Q4WWS3"/>
<dbReference type="EnsemblFungi" id="EAL92880">
    <property type="protein sequence ID" value="EAL92880"/>
    <property type="gene ID" value="AFUA_3G06880"/>
</dbReference>
<dbReference type="GeneID" id="3511864"/>
<dbReference type="KEGG" id="afm:AFUA_3G06880"/>
<dbReference type="VEuPathDB" id="FungiDB:Afu3g06880"/>
<dbReference type="eggNOG" id="KOG2527">
    <property type="taxonomic scope" value="Eukaryota"/>
</dbReference>
<dbReference type="HOGENOM" id="CLU_057172_2_1_1"/>
<dbReference type="InParanoid" id="Q4WWS3"/>
<dbReference type="OMA" id="NMYTDYE"/>
<dbReference type="OrthoDB" id="5227681at2759"/>
<dbReference type="Proteomes" id="UP000002530">
    <property type="component" value="Chromosome 3"/>
</dbReference>
<dbReference type="GO" id="GO:0031901">
    <property type="term" value="C:early endosome membrane"/>
    <property type="evidence" value="ECO:0000318"/>
    <property type="project" value="GO_Central"/>
</dbReference>
<dbReference type="GO" id="GO:0000139">
    <property type="term" value="C:Golgi membrane"/>
    <property type="evidence" value="ECO:0007669"/>
    <property type="project" value="UniProtKB-SubCell"/>
</dbReference>
<dbReference type="GO" id="GO:0030904">
    <property type="term" value="C:retromer complex"/>
    <property type="evidence" value="ECO:0000318"/>
    <property type="project" value="GO_Central"/>
</dbReference>
<dbReference type="GO" id="GO:0032266">
    <property type="term" value="F:phosphatidylinositol-3-phosphate binding"/>
    <property type="evidence" value="ECO:0000318"/>
    <property type="project" value="GO_Central"/>
</dbReference>
<dbReference type="GO" id="GO:0032456">
    <property type="term" value="P:endocytic recycling"/>
    <property type="evidence" value="ECO:0000318"/>
    <property type="project" value="GO_Central"/>
</dbReference>
<dbReference type="GO" id="GO:0034499">
    <property type="term" value="P:late endosome to Golgi transport"/>
    <property type="evidence" value="ECO:0000318"/>
    <property type="project" value="GO_Central"/>
</dbReference>
<dbReference type="GO" id="GO:0015031">
    <property type="term" value="P:protein transport"/>
    <property type="evidence" value="ECO:0007669"/>
    <property type="project" value="UniProtKB-KW"/>
</dbReference>
<dbReference type="CDD" id="cd07295">
    <property type="entry name" value="PX_Grd19"/>
    <property type="match status" value="1"/>
</dbReference>
<dbReference type="FunFam" id="3.30.1520.10:FF:000030">
    <property type="entry name" value="Sorting nexin-3, variant"/>
    <property type="match status" value="1"/>
</dbReference>
<dbReference type="Gene3D" id="3.30.1520.10">
    <property type="entry name" value="Phox-like domain"/>
    <property type="match status" value="1"/>
</dbReference>
<dbReference type="InterPro" id="IPR001683">
    <property type="entry name" value="PX_dom"/>
</dbReference>
<dbReference type="InterPro" id="IPR036871">
    <property type="entry name" value="PX_dom_sf"/>
</dbReference>
<dbReference type="InterPro" id="IPR042138">
    <property type="entry name" value="PX_Grd19_PX"/>
</dbReference>
<dbReference type="InterPro" id="IPR051074">
    <property type="entry name" value="Sorting_Nexin"/>
</dbReference>
<dbReference type="PANTHER" id="PTHR45963">
    <property type="entry name" value="RE52028P"/>
    <property type="match status" value="1"/>
</dbReference>
<dbReference type="PANTHER" id="PTHR45963:SF2">
    <property type="entry name" value="RE52028P"/>
    <property type="match status" value="1"/>
</dbReference>
<dbReference type="Pfam" id="PF00787">
    <property type="entry name" value="PX"/>
    <property type="match status" value="1"/>
</dbReference>
<dbReference type="SMART" id="SM00312">
    <property type="entry name" value="PX"/>
    <property type="match status" value="1"/>
</dbReference>
<dbReference type="SUPFAM" id="SSF64268">
    <property type="entry name" value="PX domain"/>
    <property type="match status" value="1"/>
</dbReference>
<dbReference type="PROSITE" id="PS50195">
    <property type="entry name" value="PX"/>
    <property type="match status" value="1"/>
</dbReference>
<gene>
    <name type="primary">snx3</name>
    <name type="ORF">AFUA_3G06880</name>
</gene>